<proteinExistence type="evidence at protein level"/>
<comment type="function">
    <text evidence="3">Catalyzes the interconversion of glucose 1-phosphate and glucose 6-phosphate, and the interconversion of mannose 1-phosphate and mannose 6-phosphate. Also displays low activity with deoxyribose 1-phosphate and glucosamine 1-phosphate.</text>
</comment>
<comment type="catalytic activity">
    <reaction evidence="3">
        <text>alpha-D-glucose 1-phosphate = alpha-D-glucose 6-phosphate</text>
        <dbReference type="Rhea" id="RHEA:23536"/>
        <dbReference type="ChEBI" id="CHEBI:58225"/>
        <dbReference type="ChEBI" id="CHEBI:58601"/>
        <dbReference type="EC" id="5.4.2.2"/>
    </reaction>
</comment>
<comment type="catalytic activity">
    <reaction evidence="3">
        <text>alpha-D-mannose 1-phosphate = D-mannose 6-phosphate</text>
        <dbReference type="Rhea" id="RHEA:11140"/>
        <dbReference type="ChEBI" id="CHEBI:58409"/>
        <dbReference type="ChEBI" id="CHEBI:58735"/>
        <dbReference type="EC" id="5.4.2.8"/>
    </reaction>
</comment>
<comment type="cofactor">
    <cofactor evidence="3">
        <name>Mg(2+)</name>
        <dbReference type="ChEBI" id="CHEBI:18420"/>
    </cofactor>
    <text evidence="3">Can also use Ni(2+), Mn(2+) and Zn(2+), to a lesser extent.</text>
</comment>
<comment type="biophysicochemical properties">
    <kinetics>
        <KM evidence="3">3 mM for glucose 1-phosphate</KM>
        <KM evidence="3">3.2 mM for mannose 1-phosphate</KM>
        <KM evidence="3">3.5 mM for 2-deoxyribose 1-phosphate</KM>
        <Vmax evidence="3">690.0 umol/min/mg enzyme with glucose 1-phosphate as substrate</Vmax>
        <Vmax evidence="3">401.0 umol/min/mg enzyme with mannose 1-phosphate as substrate</Vmax>
        <Vmax evidence="3">230.0 umol/min/mg enzyme with 2-deoxyribose 1-phosphate as substrate</Vmax>
        <text evidence="3">kcat is 575 sec(-1) with glucose 1-phosphate as substrate. kcat is 330 sec(-1) with mannose 1-phosphate as substrate. kcat is 190 sec(-1) with 2-deoxyribose 1-phosphate as substrate.</text>
    </kinetics>
    <phDependence>
        <text evidence="3">Optimum pH is 7.0 for PGM activity.</text>
    </phDependence>
    <temperatureDependence>
        <text evidence="3">Optimum temperature is 90 degrees Celsius for PGM activity.</text>
    </temperatureDependence>
</comment>
<comment type="subunit">
    <text evidence="3">Homotetramer.</text>
</comment>
<comment type="induction">
    <text evidence="3">Up-regulated in the presence of starch.</text>
</comment>
<comment type="PTM">
    <text evidence="2">Activated by phosphorylation.</text>
</comment>
<comment type="similarity">
    <text evidence="5">Belongs to the phosphohexose mutase family.</text>
</comment>
<reference key="1">
    <citation type="journal article" date="2004" name="J. Bacteriol.">
        <title>Among multiple phosphomannomutase gene orthologues, only one gene encodes a protein with phosphoglucomutase and phosphomannomutase activities in Thermococcus kodakaraensis.</title>
        <authorList>
            <person name="Rashid N."/>
            <person name="Kanai T."/>
            <person name="Atomi H."/>
            <person name="Imanaka T."/>
        </authorList>
    </citation>
    <scope>NUCLEOTIDE SEQUENCE [GENOMIC DNA]</scope>
    <scope>PROTEIN SEQUENCE OF 1-6</scope>
    <scope>FUNCTION</scope>
    <scope>CATALYTIC ACTIVITY</scope>
    <scope>COFACTOR</scope>
    <scope>BIOPHYSICOCHEMICAL PROPERTIES</scope>
    <scope>SUBUNIT</scope>
    <scope>INDUCTION</scope>
    <source>
        <strain>ATCC BAA-918 / JCM 12380 / KOD1</strain>
    </source>
</reference>
<reference key="2">
    <citation type="journal article" date="2005" name="Genome Res.">
        <title>Complete genome sequence of the hyperthermophilic archaeon Thermococcus kodakaraensis KOD1 and comparison with Pyrococcus genomes.</title>
        <authorList>
            <person name="Fukui T."/>
            <person name="Atomi H."/>
            <person name="Kanai T."/>
            <person name="Matsumi R."/>
            <person name="Fujiwara S."/>
            <person name="Imanaka T."/>
        </authorList>
    </citation>
    <scope>NUCLEOTIDE SEQUENCE [LARGE SCALE GENOMIC DNA]</scope>
    <source>
        <strain>ATCC BAA-918 / JCM 12380 / KOD1</strain>
    </source>
</reference>
<name>PGMMM_THEKO</name>
<dbReference type="EC" id="5.4.2.2" evidence="3"/>
<dbReference type="EC" id="5.4.2.8" evidence="3"/>
<dbReference type="EMBL" id="AB126241">
    <property type="protein sequence ID" value="BAD42440.1"/>
    <property type="molecule type" value="Genomic_DNA"/>
</dbReference>
<dbReference type="EMBL" id="AP006878">
    <property type="protein sequence ID" value="BAD85297.1"/>
    <property type="molecule type" value="Genomic_DNA"/>
</dbReference>
<dbReference type="RefSeq" id="WP_011250059.1">
    <property type="nucleotide sequence ID" value="NC_006624.1"/>
</dbReference>
<dbReference type="SMR" id="Q68BJ6"/>
<dbReference type="STRING" id="69014.TK1108"/>
<dbReference type="EnsemblBacteria" id="BAD85297">
    <property type="protein sequence ID" value="BAD85297"/>
    <property type="gene ID" value="TK1108"/>
</dbReference>
<dbReference type="GeneID" id="78447621"/>
<dbReference type="KEGG" id="tko:TK1108"/>
<dbReference type="PATRIC" id="fig|69014.16.peg.1084"/>
<dbReference type="eggNOG" id="arCOG00767">
    <property type="taxonomic scope" value="Archaea"/>
</dbReference>
<dbReference type="HOGENOM" id="CLU_016950_7_1_2"/>
<dbReference type="InParanoid" id="Q68BJ6"/>
<dbReference type="OrthoDB" id="10363at2157"/>
<dbReference type="PhylomeDB" id="Q68BJ6"/>
<dbReference type="Proteomes" id="UP000000536">
    <property type="component" value="Chromosome"/>
</dbReference>
<dbReference type="GO" id="GO:0046872">
    <property type="term" value="F:metal ion binding"/>
    <property type="evidence" value="ECO:0007669"/>
    <property type="project" value="UniProtKB-KW"/>
</dbReference>
<dbReference type="GO" id="GO:0004614">
    <property type="term" value="F:phosphoglucomutase activity"/>
    <property type="evidence" value="ECO:0007669"/>
    <property type="project" value="UniProtKB-EC"/>
</dbReference>
<dbReference type="GO" id="GO:0008966">
    <property type="term" value="F:phosphoglucosamine mutase activity"/>
    <property type="evidence" value="ECO:0007669"/>
    <property type="project" value="InterPro"/>
</dbReference>
<dbReference type="GO" id="GO:0004615">
    <property type="term" value="F:phosphomannomutase activity"/>
    <property type="evidence" value="ECO:0000318"/>
    <property type="project" value="GO_Central"/>
</dbReference>
<dbReference type="GO" id="GO:0005975">
    <property type="term" value="P:carbohydrate metabolic process"/>
    <property type="evidence" value="ECO:0007669"/>
    <property type="project" value="InterPro"/>
</dbReference>
<dbReference type="CDD" id="cd03087">
    <property type="entry name" value="PGM_like1"/>
    <property type="match status" value="1"/>
</dbReference>
<dbReference type="FunFam" id="3.40.120.10:FF:000001">
    <property type="entry name" value="Phosphoglucosamine mutase"/>
    <property type="match status" value="1"/>
</dbReference>
<dbReference type="FunFam" id="3.40.120.10:FF:000003">
    <property type="entry name" value="Phosphoglucosamine mutase"/>
    <property type="match status" value="1"/>
</dbReference>
<dbReference type="FunFam" id="3.30.310.50:FF:000009">
    <property type="entry name" value="Probable phosphoglucosamine mutase"/>
    <property type="match status" value="1"/>
</dbReference>
<dbReference type="Gene3D" id="3.40.120.10">
    <property type="entry name" value="Alpha-D-Glucose-1,6-Bisphosphate, subunit A, domain 3"/>
    <property type="match status" value="3"/>
</dbReference>
<dbReference type="Gene3D" id="3.30.310.50">
    <property type="entry name" value="Alpha-D-phosphohexomutase, C-terminal domain"/>
    <property type="match status" value="1"/>
</dbReference>
<dbReference type="InterPro" id="IPR005844">
    <property type="entry name" value="A-D-PHexomutase_a/b/a-I"/>
</dbReference>
<dbReference type="InterPro" id="IPR016055">
    <property type="entry name" value="A-D-PHexomutase_a/b/a-I/II/III"/>
</dbReference>
<dbReference type="InterPro" id="IPR005845">
    <property type="entry name" value="A-D-PHexomutase_a/b/a-II"/>
</dbReference>
<dbReference type="InterPro" id="IPR005846">
    <property type="entry name" value="A-D-PHexomutase_a/b/a-III"/>
</dbReference>
<dbReference type="InterPro" id="IPR005843">
    <property type="entry name" value="A-D-PHexomutase_C"/>
</dbReference>
<dbReference type="InterPro" id="IPR036900">
    <property type="entry name" value="A-D-PHexomutase_C_sf"/>
</dbReference>
<dbReference type="InterPro" id="IPR005841">
    <property type="entry name" value="Alpha-D-phosphohexomutase_SF"/>
</dbReference>
<dbReference type="InterPro" id="IPR024086">
    <property type="entry name" value="GlmM_arc-type"/>
</dbReference>
<dbReference type="NCBIfam" id="TIGR03990">
    <property type="entry name" value="Arch_GlmM"/>
    <property type="match status" value="1"/>
</dbReference>
<dbReference type="PANTHER" id="PTHR43771">
    <property type="entry name" value="PHOSPHOMANNOMUTASE"/>
    <property type="match status" value="1"/>
</dbReference>
<dbReference type="PANTHER" id="PTHR43771:SF1">
    <property type="entry name" value="PHOSPHOMANNOMUTASE"/>
    <property type="match status" value="1"/>
</dbReference>
<dbReference type="Pfam" id="PF02878">
    <property type="entry name" value="PGM_PMM_I"/>
    <property type="match status" value="1"/>
</dbReference>
<dbReference type="Pfam" id="PF02879">
    <property type="entry name" value="PGM_PMM_II"/>
    <property type="match status" value="1"/>
</dbReference>
<dbReference type="Pfam" id="PF02880">
    <property type="entry name" value="PGM_PMM_III"/>
    <property type="match status" value="1"/>
</dbReference>
<dbReference type="Pfam" id="PF00408">
    <property type="entry name" value="PGM_PMM_IV"/>
    <property type="match status" value="1"/>
</dbReference>
<dbReference type="PRINTS" id="PR00509">
    <property type="entry name" value="PGMPMM"/>
</dbReference>
<dbReference type="SUPFAM" id="SSF55957">
    <property type="entry name" value="Phosphoglucomutase, C-terminal domain"/>
    <property type="match status" value="1"/>
</dbReference>
<dbReference type="SUPFAM" id="SSF53738">
    <property type="entry name" value="Phosphoglucomutase, first 3 domains"/>
    <property type="match status" value="3"/>
</dbReference>
<protein>
    <recommendedName>
        <fullName evidence="4">Phosphoglucomutase/phosphomannomutase</fullName>
        <shortName evidence="4">PGM/PMM</shortName>
        <ecNumber evidence="3">5.4.2.2</ecNumber>
        <ecNumber evidence="3">5.4.2.8</ecNumber>
    </recommendedName>
</protein>
<keyword id="KW-0903">Direct protein sequencing</keyword>
<keyword id="KW-0413">Isomerase</keyword>
<keyword id="KW-0460">Magnesium</keyword>
<keyword id="KW-0479">Metal-binding</keyword>
<keyword id="KW-0597">Phosphoprotein</keyword>
<keyword id="KW-1185">Reference proteome</keyword>
<gene>
    <name evidence="7" type="ordered locus">TK1108</name>
    <name evidence="6" type="ORF">Tko1621</name>
</gene>
<feature type="chain" id="PRO_0000433407" description="Phosphoglucomutase/phosphomannomutase">
    <location>
        <begin position="1"/>
        <end position="456"/>
    </location>
</feature>
<feature type="active site" description="Phosphoserine intermediate" evidence="2">
    <location>
        <position position="101"/>
    </location>
</feature>
<feature type="binding site" description="via phosphate group" evidence="1">
    <location>
        <position position="101"/>
    </location>
    <ligand>
        <name>Mg(2+)</name>
        <dbReference type="ChEBI" id="CHEBI:18420"/>
    </ligand>
</feature>
<feature type="binding site" evidence="1">
    <location>
        <position position="243"/>
    </location>
    <ligand>
        <name>Mg(2+)</name>
        <dbReference type="ChEBI" id="CHEBI:18420"/>
    </ligand>
</feature>
<feature type="binding site" evidence="1">
    <location>
        <position position="245"/>
    </location>
    <ligand>
        <name>Mg(2+)</name>
        <dbReference type="ChEBI" id="CHEBI:18420"/>
    </ligand>
</feature>
<feature type="binding site" evidence="1">
    <location>
        <position position="247"/>
    </location>
    <ligand>
        <name>Mg(2+)</name>
        <dbReference type="ChEBI" id="CHEBI:18420"/>
    </ligand>
</feature>
<feature type="modified residue" description="Phosphoserine; by autocatalysis" evidence="2">
    <location>
        <position position="101"/>
    </location>
</feature>
<sequence>MGKLFGTFGVRGIANEEITPEFALKIGMAFGTLLKREGRERPLVVVGRDTRVSGEMLKDALISGLLSTGCDVIDVGIAPTPAIQWATNHFNADGGAVITASHNPPEYNGIKLLEPNGMGLKKEREAIVEELFFSEDFHRAKWNEIGELRKEDIIKPYIEAIKNRVDVEAIKKRRPFVVVDTSNGAGSLTLPYLLRELGCKVVSVNAHPDGHFPARNPEPNEENLKGFMEIVKALGADFGVAQDGDADRAVFIDENGRFIQGDKTFALVADAVLRENGGGLLVTTIATSNLLDDIAKRNGAKVMRTKVGDLIVARALLENNGTIGGEENGGVIFPDFVLGRDGAMTTAKIVEIFAKSGKKFSELIDELPKYYQFKTKRHVEGDRKAIVAKVAELAEKKGYKIDTTDGTKIIFDDGWVLVRASGTEPIIRIFSEAKSEEKAREYLELGIKLLEEALKG</sequence>
<accession>Q68BJ6</accession>
<accession>Q5JE41</accession>
<evidence type="ECO:0000250" key="1">
    <source>
        <dbReference type="UniProtKB" id="P00949"/>
    </source>
</evidence>
<evidence type="ECO:0000250" key="2">
    <source>
        <dbReference type="UniProtKB" id="P31120"/>
    </source>
</evidence>
<evidence type="ECO:0000269" key="3">
    <source>
    </source>
</evidence>
<evidence type="ECO:0000303" key="4">
    <source>
    </source>
</evidence>
<evidence type="ECO:0000305" key="5"/>
<evidence type="ECO:0000312" key="6">
    <source>
        <dbReference type="EMBL" id="BAD42440.1"/>
    </source>
</evidence>
<evidence type="ECO:0000312" key="7">
    <source>
        <dbReference type="EMBL" id="BAD85297.1"/>
    </source>
</evidence>
<organism>
    <name type="scientific">Thermococcus kodakarensis (strain ATCC BAA-918 / JCM 12380 / KOD1)</name>
    <name type="common">Pyrococcus kodakaraensis (strain KOD1)</name>
    <dbReference type="NCBI Taxonomy" id="69014"/>
    <lineage>
        <taxon>Archaea</taxon>
        <taxon>Methanobacteriati</taxon>
        <taxon>Methanobacteriota</taxon>
        <taxon>Thermococci</taxon>
        <taxon>Thermococcales</taxon>
        <taxon>Thermococcaceae</taxon>
        <taxon>Thermococcus</taxon>
    </lineage>
</organism>